<proteinExistence type="evidence at protein level"/>
<protein>
    <recommendedName>
        <fullName>Cartilage acidic protein 1</fullName>
    </recommendedName>
    <alternativeName>
        <fullName>68 kDa chondrocyte-expressed protein</fullName>
        <shortName>CEP-68</shortName>
    </alternativeName>
    <alternativeName>
        <fullName>ASPIC</fullName>
    </alternativeName>
</protein>
<dbReference type="EMBL" id="AJ276171">
    <property type="protein sequence ID" value="CAB98267.1"/>
    <property type="molecule type" value="mRNA"/>
</dbReference>
<dbReference type="EMBL" id="AJ276171">
    <property type="protein sequence ID" value="CAB98268.1"/>
    <property type="status" value="ALT_INIT"/>
    <property type="molecule type" value="mRNA"/>
</dbReference>
<dbReference type="EMBL" id="AJ276171">
    <property type="protein sequence ID" value="CAB98269.1"/>
    <property type="status" value="ALT_INIT"/>
    <property type="molecule type" value="mRNA"/>
</dbReference>
<dbReference type="EMBL" id="AK001182">
    <property type="protein sequence ID" value="BAA91540.1"/>
    <property type="status" value="ALT_INIT"/>
    <property type="molecule type" value="mRNA"/>
</dbReference>
<dbReference type="EMBL" id="AK292084">
    <property type="protein sequence ID" value="BAF84773.1"/>
    <property type="molecule type" value="mRNA"/>
</dbReference>
<dbReference type="EMBL" id="AL139239">
    <property type="status" value="NOT_ANNOTATED_CDS"/>
    <property type="molecule type" value="Genomic_DNA"/>
</dbReference>
<dbReference type="EMBL" id="AL358938">
    <property type="status" value="NOT_ANNOTATED_CDS"/>
    <property type="molecule type" value="Genomic_DNA"/>
</dbReference>
<dbReference type="EMBL" id="AJ279016">
    <property type="protein sequence ID" value="CAC08451.1"/>
    <property type="molecule type" value="mRNA"/>
</dbReference>
<dbReference type="EMBL" id="AJ421515">
    <property type="protein sequence ID" value="CAD13394.1"/>
    <property type="molecule type" value="mRNA"/>
</dbReference>
<dbReference type="EMBL" id="BC034245">
    <property type="protein sequence ID" value="AAH34245.1"/>
    <property type="status" value="ALT_INIT"/>
    <property type="molecule type" value="mRNA"/>
</dbReference>
<dbReference type="CCDS" id="CCDS31266.1">
    <molecule id="Q9NQ79-1"/>
</dbReference>
<dbReference type="CCDS" id="CCDS55723.1">
    <molecule id="Q9NQ79-2"/>
</dbReference>
<dbReference type="RefSeq" id="NP_001193457.1">
    <molecule id="Q9NQ79-2"/>
    <property type="nucleotide sequence ID" value="NM_001206528.3"/>
</dbReference>
<dbReference type="RefSeq" id="NP_060528.3">
    <molecule id="Q9NQ79-1"/>
    <property type="nucleotide sequence ID" value="NM_018058.6"/>
</dbReference>
<dbReference type="SMR" id="Q9NQ79"/>
<dbReference type="BioGRID" id="120427">
    <property type="interactions" value="26"/>
</dbReference>
<dbReference type="FunCoup" id="Q9NQ79">
    <property type="interactions" value="116"/>
</dbReference>
<dbReference type="IntAct" id="Q9NQ79">
    <property type="interactions" value="26"/>
</dbReference>
<dbReference type="STRING" id="9606.ENSP00000359629"/>
<dbReference type="GlyCosmos" id="Q9NQ79">
    <property type="glycosylation" value="6 sites, 2 glycans"/>
</dbReference>
<dbReference type="GlyGen" id="Q9NQ79">
    <property type="glycosylation" value="6 sites, 2 O-linked glycans (1 site)"/>
</dbReference>
<dbReference type="iPTMnet" id="Q9NQ79"/>
<dbReference type="PhosphoSitePlus" id="Q9NQ79"/>
<dbReference type="BioMuta" id="CRTAC1"/>
<dbReference type="DMDM" id="50400672"/>
<dbReference type="jPOST" id="Q9NQ79"/>
<dbReference type="MassIVE" id="Q9NQ79"/>
<dbReference type="PaxDb" id="9606-ENSP00000359629"/>
<dbReference type="PeptideAtlas" id="Q9NQ79"/>
<dbReference type="ProteomicsDB" id="82098">
    <molecule id="Q9NQ79-1"/>
</dbReference>
<dbReference type="ProteomicsDB" id="82099">
    <molecule id="Q9NQ79-2"/>
</dbReference>
<dbReference type="ProteomicsDB" id="82100">
    <molecule id="Q9NQ79-3"/>
</dbReference>
<dbReference type="Antibodypedia" id="2172">
    <property type="antibodies" value="163 antibodies from 27 providers"/>
</dbReference>
<dbReference type="DNASU" id="55118"/>
<dbReference type="Ensembl" id="ENST00000370591.6">
    <molecule id="Q9NQ79-2"/>
    <property type="protein sequence ID" value="ENSP00000359623.2"/>
    <property type="gene ID" value="ENSG00000095713.14"/>
</dbReference>
<dbReference type="Ensembl" id="ENST00000370597.8">
    <molecule id="Q9NQ79-1"/>
    <property type="protein sequence ID" value="ENSP00000359629.3"/>
    <property type="gene ID" value="ENSG00000095713.14"/>
</dbReference>
<dbReference type="GeneID" id="55118"/>
<dbReference type="KEGG" id="hsa:55118"/>
<dbReference type="MANE-Select" id="ENST00000370597.8">
    <property type="protein sequence ID" value="ENSP00000359629.3"/>
    <property type="RefSeq nucleotide sequence ID" value="NM_018058.7"/>
    <property type="RefSeq protein sequence ID" value="NP_060528.3"/>
</dbReference>
<dbReference type="UCSC" id="uc001kou.2">
    <molecule id="Q9NQ79-1"/>
    <property type="organism name" value="human"/>
</dbReference>
<dbReference type="AGR" id="HGNC:14882"/>
<dbReference type="CTD" id="55118"/>
<dbReference type="DisGeNET" id="55118"/>
<dbReference type="GeneCards" id="CRTAC1"/>
<dbReference type="HGNC" id="HGNC:14882">
    <property type="gene designation" value="CRTAC1"/>
</dbReference>
<dbReference type="HPA" id="ENSG00000095713">
    <property type="expression patterns" value="Tissue enhanced (fallopian tube, lung, seminal vesicle)"/>
</dbReference>
<dbReference type="MIM" id="606276">
    <property type="type" value="gene"/>
</dbReference>
<dbReference type="neXtProt" id="NX_Q9NQ79"/>
<dbReference type="OpenTargets" id="ENSG00000095713"/>
<dbReference type="PharmGKB" id="PA26899"/>
<dbReference type="VEuPathDB" id="HostDB:ENSG00000095713"/>
<dbReference type="eggNOG" id="ENOG502QQ5V">
    <property type="taxonomic scope" value="Eukaryota"/>
</dbReference>
<dbReference type="GeneTree" id="ENSGT00390000013726"/>
<dbReference type="HOGENOM" id="CLU_027473_0_0_1"/>
<dbReference type="InParanoid" id="Q9NQ79"/>
<dbReference type="OMA" id="SQLNYGM"/>
<dbReference type="OrthoDB" id="10022113at2759"/>
<dbReference type="PAN-GO" id="Q9NQ79">
    <property type="GO annotations" value="1 GO annotation based on evolutionary models"/>
</dbReference>
<dbReference type="PhylomeDB" id="Q9NQ79"/>
<dbReference type="TreeFam" id="TF333171"/>
<dbReference type="PathwayCommons" id="Q9NQ79"/>
<dbReference type="SignaLink" id="Q9NQ79"/>
<dbReference type="BioGRID-ORCS" id="55118">
    <property type="hits" value="14 hits in 1143 CRISPR screens"/>
</dbReference>
<dbReference type="CD-CODE" id="FB4E32DD">
    <property type="entry name" value="Presynaptic clusters and postsynaptic densities"/>
</dbReference>
<dbReference type="ChiTaRS" id="CRTAC1">
    <property type="organism name" value="human"/>
</dbReference>
<dbReference type="GenomeRNAi" id="55118"/>
<dbReference type="Pharos" id="Q9NQ79">
    <property type="development level" value="Tbio"/>
</dbReference>
<dbReference type="PRO" id="PR:Q9NQ79"/>
<dbReference type="Proteomes" id="UP000005640">
    <property type="component" value="Chromosome 10"/>
</dbReference>
<dbReference type="RNAct" id="Q9NQ79">
    <property type="molecule type" value="protein"/>
</dbReference>
<dbReference type="Bgee" id="ENSG00000095713">
    <property type="expression patterns" value="Expressed in tendon of biceps brachii and 161 other cell types or tissues"/>
</dbReference>
<dbReference type="ExpressionAtlas" id="Q9NQ79">
    <property type="expression patterns" value="baseline and differential"/>
</dbReference>
<dbReference type="GO" id="GO:0070062">
    <property type="term" value="C:extracellular exosome"/>
    <property type="evidence" value="ECO:0007005"/>
    <property type="project" value="UniProtKB"/>
</dbReference>
<dbReference type="GO" id="GO:0098978">
    <property type="term" value="C:glutamatergic synapse"/>
    <property type="evidence" value="ECO:0007669"/>
    <property type="project" value="Ensembl"/>
</dbReference>
<dbReference type="GO" id="GO:0030426">
    <property type="term" value="C:growth cone"/>
    <property type="evidence" value="ECO:0007669"/>
    <property type="project" value="Ensembl"/>
</dbReference>
<dbReference type="GO" id="GO:0014069">
    <property type="term" value="C:postsynaptic density"/>
    <property type="evidence" value="ECO:0007669"/>
    <property type="project" value="Ensembl"/>
</dbReference>
<dbReference type="GO" id="GO:0005509">
    <property type="term" value="F:calcium ion binding"/>
    <property type="evidence" value="ECO:0007669"/>
    <property type="project" value="InterPro"/>
</dbReference>
<dbReference type="GO" id="GO:0007413">
    <property type="term" value="P:axonal fasciculation"/>
    <property type="evidence" value="ECO:0000318"/>
    <property type="project" value="GO_Central"/>
</dbReference>
<dbReference type="GO" id="GO:0021772">
    <property type="term" value="P:olfactory bulb development"/>
    <property type="evidence" value="ECO:0007669"/>
    <property type="project" value="Ensembl"/>
</dbReference>
<dbReference type="GO" id="GO:0051963">
    <property type="term" value="P:regulation of synapse assembly"/>
    <property type="evidence" value="ECO:0007669"/>
    <property type="project" value="Ensembl"/>
</dbReference>
<dbReference type="CDD" id="cd00054">
    <property type="entry name" value="EGF_CA"/>
    <property type="match status" value="1"/>
</dbReference>
<dbReference type="Gene3D" id="2.130.10.130">
    <property type="entry name" value="Integrin alpha, N-terminal"/>
    <property type="match status" value="1"/>
</dbReference>
<dbReference type="Gene3D" id="2.10.25.10">
    <property type="entry name" value="Laminin"/>
    <property type="match status" value="1"/>
</dbReference>
<dbReference type="InterPro" id="IPR027039">
    <property type="entry name" value="Crtac1"/>
</dbReference>
<dbReference type="InterPro" id="IPR001881">
    <property type="entry name" value="EGF-like_Ca-bd_dom"/>
</dbReference>
<dbReference type="InterPro" id="IPR018097">
    <property type="entry name" value="EGF_Ca-bd_CS"/>
</dbReference>
<dbReference type="InterPro" id="IPR013517">
    <property type="entry name" value="FG-GAP"/>
</dbReference>
<dbReference type="InterPro" id="IPR028994">
    <property type="entry name" value="Integrin_alpha_N"/>
</dbReference>
<dbReference type="InterPro" id="IPR049883">
    <property type="entry name" value="NOTCH1_EGF-like"/>
</dbReference>
<dbReference type="InterPro" id="IPR011519">
    <property type="entry name" value="UnbV_ASPIC"/>
</dbReference>
<dbReference type="PANTHER" id="PTHR16026">
    <property type="entry name" value="CARTILAGE ACIDIC PROTEIN 1"/>
    <property type="match status" value="1"/>
</dbReference>
<dbReference type="PANTHER" id="PTHR16026:SF0">
    <property type="entry name" value="CARTILAGE ACIDIC PROTEIN 1"/>
    <property type="match status" value="1"/>
</dbReference>
<dbReference type="Pfam" id="PF07645">
    <property type="entry name" value="EGF_CA"/>
    <property type="match status" value="1"/>
</dbReference>
<dbReference type="Pfam" id="PF13517">
    <property type="entry name" value="FG-GAP_3"/>
    <property type="match status" value="1"/>
</dbReference>
<dbReference type="Pfam" id="PF07593">
    <property type="entry name" value="UnbV_ASPIC"/>
    <property type="match status" value="1"/>
</dbReference>
<dbReference type="SMART" id="SM00179">
    <property type="entry name" value="EGF_CA"/>
    <property type="match status" value="1"/>
</dbReference>
<dbReference type="SUPFAM" id="SSF57196">
    <property type="entry name" value="EGF/Laminin"/>
    <property type="match status" value="1"/>
</dbReference>
<dbReference type="SUPFAM" id="SSF69318">
    <property type="entry name" value="Integrin alpha N-terminal domain"/>
    <property type="match status" value="1"/>
</dbReference>
<dbReference type="PROSITE" id="PS01187">
    <property type="entry name" value="EGF_CA"/>
    <property type="match status" value="1"/>
</dbReference>
<feature type="signal peptide" evidence="1">
    <location>
        <begin position="1"/>
        <end position="27"/>
    </location>
</feature>
<feature type="chain" id="PRO_0000007497" description="Cartilage acidic protein 1">
    <location>
        <begin position="28"/>
        <end position="661"/>
    </location>
</feature>
<feature type="repeat" description="FG-GAP 1; atypical">
    <location>
        <begin position="46"/>
        <end position="88"/>
    </location>
</feature>
<feature type="repeat" description="FG-GAP 2; atypical">
    <location>
        <begin position="105"/>
        <end position="147"/>
    </location>
</feature>
<feature type="repeat" description="FG-GAP 3; atypical">
    <location>
        <begin position="283"/>
        <end position="333"/>
    </location>
</feature>
<feature type="repeat" description="FG-GAP 4; atypical">
    <location>
        <begin position="395"/>
        <end position="437"/>
    </location>
</feature>
<feature type="domain" description="EGF-like">
    <location>
        <begin position="559"/>
        <end position="605"/>
    </location>
</feature>
<feature type="glycosylation site" description="O-linked (GalNAc...) threonine" evidence="1">
    <location>
        <position position="608"/>
    </location>
</feature>
<feature type="glycosylation site" description="O-linked (GalNAc...) threonine" evidence="1">
    <location>
        <position position="618"/>
    </location>
</feature>
<feature type="glycosylation site" description="O-linked (GalNAc...) threonine" evidence="1">
    <location>
        <position position="619"/>
    </location>
</feature>
<feature type="glycosylation site" description="O-linked (GalNAc...) threonine" evidence="1">
    <location>
        <position position="621"/>
    </location>
</feature>
<feature type="glycosylation site" description="O-linked (GalNAc...) threonine" evidence="1">
    <location>
        <position position="626"/>
    </location>
</feature>
<feature type="disulfide bond" evidence="1">
    <location>
        <begin position="563"/>
        <end position="577"/>
    </location>
</feature>
<feature type="disulfide bond" evidence="1">
    <location>
        <begin position="570"/>
        <end position="586"/>
    </location>
</feature>
<feature type="disulfide bond" evidence="1">
    <location>
        <begin position="592"/>
        <end position="605"/>
    </location>
</feature>
<feature type="splice variant" id="VSP_010893" description="In isoform 3." evidence="5">
    <original>CGQGFSQQENGHCMDTNECIQFPFVCPRDKPVCVNTYGSYRCRTNKKCSRGYEPNEDGTACVGTLGQSPGPRPTTPTAAAATAAAAAAAGAATAAPVLVDGDLNLGSVVKESCEPSC</original>
    <variation>TPMNASSSHSCALETSPYVSTPMEATGAGPTRSAVGATSPTRMAQPAWGLSASHRAPAPPPPPLLLPLPLLLPLLELPLLHRSS</variation>
    <location>
        <begin position="545"/>
        <end position="661"/>
    </location>
</feature>
<feature type="splice variant" id="VSP_010894" description="In isoform 2." evidence="4">
    <original>GTLGQSPGPRPTTPTAAAATAAAAAAAGAATAAPVLVDG</original>
    <variation>AQVAFLGGYSSAASRISEPLSRASYLSLGLGLCLQLYAL</variation>
    <location>
        <begin position="607"/>
        <end position="645"/>
    </location>
</feature>
<feature type="splice variant" id="VSP_010895" description="In isoform 2." evidence="4">
    <location>
        <begin position="646"/>
        <end position="661"/>
    </location>
</feature>
<feature type="sequence variant" id="VAR_048972" description="In dbSNP:rs35853031.">
    <original>A</original>
    <variation>T</variation>
    <location>
        <position position="253"/>
    </location>
</feature>
<feature type="sequence variant" id="VAR_048973" description="In dbSNP:rs2297935.">
    <original>V</original>
    <variation>M</variation>
    <location>
        <position position="569"/>
    </location>
</feature>
<feature type="sequence variant" id="VAR_061152" description="In dbSNP:rs56007204.">
    <original>E</original>
    <variation>K</variation>
    <location>
        <position position="658"/>
    </location>
</feature>
<feature type="sequence conflict" description="In Ref. 2; BAA91540." evidence="6" ref="2">
    <original>F</original>
    <variation>V</variation>
    <location>
        <position position="454"/>
    </location>
</feature>
<comment type="interaction">
    <interactant intactId="EBI-10205543">
        <id>Q9NQ79</id>
    </interactant>
    <interactant intactId="EBI-745213">
        <id>P29972</id>
        <label>AQP1</label>
    </interactant>
    <organismsDiffer>false</organismsDiffer>
    <experiments>3</experiments>
</comment>
<comment type="interaction">
    <interactant intactId="EBI-10205543">
        <id>Q9NQ79</id>
    </interactant>
    <interactant intactId="EBI-739717">
        <id>Q15555</id>
        <label>MAPRE2</label>
    </interactant>
    <organismsDiffer>false</organismsDiffer>
    <experiments>8</experiments>
</comment>
<comment type="interaction">
    <interactant intactId="EBI-10205543">
        <id>Q9NQ79</id>
    </interactant>
    <interactant intactId="EBI-726739">
        <id>Q9UPY8</id>
        <label>MAPRE3</label>
    </interactant>
    <organismsDiffer>false</organismsDiffer>
    <experiments>3</experiments>
</comment>
<comment type="interaction">
    <interactant intactId="EBI-10205543">
        <id>Q9NQ79</id>
    </interactant>
    <interactant intactId="EBI-10269566">
        <id>Q8NDC4</id>
        <label>MORN4</label>
    </interactant>
    <organismsDiffer>false</organismsDiffer>
    <experiments>3</experiments>
</comment>
<comment type="subcellular location">
    <subcellularLocation>
        <location evidence="3">Secreted</location>
        <location evidence="3">Extracellular space</location>
        <location evidence="3">Extracellular matrix</location>
    </subcellularLocation>
</comment>
<comment type="alternative products">
    <event type="alternative splicing"/>
    <isoform>
        <id>Q9NQ79-1</id>
        <name>1</name>
        <name>CRTAC1-A</name>
        <sequence type="displayed"/>
    </isoform>
    <isoform>
        <id>Q9NQ79-2</id>
        <name>2</name>
        <name>CRTAC1-B</name>
        <sequence type="described" ref="VSP_010894 VSP_010895"/>
    </isoform>
    <isoform>
        <id>Q9NQ79-3</id>
        <name>3</name>
        <sequence type="described" ref="VSP_010893"/>
    </isoform>
</comment>
<comment type="tissue specificity">
    <text evidence="2 3">Expressed in the interterritorial matrix of articular deep zone cartilage (at protein level). Isoform 1 and isoform 2 are expressed in brain. Isoform 1 is detected in lung and chondrocytes. Detected in cartilage, bone, cultured chondrocytes and lung, and at low levels in heart. Not detected in osteoblasts.</text>
</comment>
<comment type="induction">
    <text evidence="2">Up-regulated by BMP4 (at protein level). Up-regulated in mesenchymal stem cells undergoing chondrogenic differentiation and by BMP4.</text>
</comment>
<comment type="PTM">
    <text evidence="3">O-glycosylated.</text>
</comment>
<comment type="miscellaneous">
    <molecule>Isoform 1</molecule>
    <text>Shares an exon with the neighboring tail-to-tail oriented gene GOLGA7B.</text>
</comment>
<comment type="sequence caution" evidence="6">
    <conflict type="erroneous initiation">
        <sequence resource="EMBL-CDS" id="AAH34245"/>
    </conflict>
    <text>Truncated N-terminus.</text>
</comment>
<comment type="sequence caution" evidence="6">
    <conflict type="erroneous initiation">
        <sequence resource="EMBL-CDS" id="BAA91540"/>
    </conflict>
    <text>Truncated N-terminus.</text>
</comment>
<comment type="sequence caution" evidence="6">
    <conflict type="erroneous initiation">
        <sequence resource="EMBL-CDS" id="CAB98268"/>
    </conflict>
    <text>Truncated N-terminus.</text>
</comment>
<comment type="sequence caution" evidence="6">
    <conflict type="erroneous initiation">
        <sequence resource="EMBL-CDS" id="CAB98269"/>
    </conflict>
    <text>Truncated N-terminus.</text>
</comment>
<name>CRAC1_HUMAN</name>
<gene>
    <name type="primary">CRTAC1</name>
    <name type="synonym">ASPIC1</name>
    <name type="synonym">CEP68</name>
</gene>
<evidence type="ECO:0000255" key="1"/>
<evidence type="ECO:0000269" key="2">
    <source>
    </source>
</evidence>
<evidence type="ECO:0000269" key="3">
    <source>
    </source>
</evidence>
<evidence type="ECO:0000303" key="4">
    <source>
    </source>
</evidence>
<evidence type="ECO:0000303" key="5">
    <source>
    </source>
</evidence>
<evidence type="ECO:0000305" key="6"/>
<keyword id="KW-0025">Alternative splicing</keyword>
<keyword id="KW-1015">Disulfide bond</keyword>
<keyword id="KW-0245">EGF-like domain</keyword>
<keyword id="KW-0272">Extracellular matrix</keyword>
<keyword id="KW-0325">Glycoprotein</keyword>
<keyword id="KW-1267">Proteomics identification</keyword>
<keyword id="KW-1185">Reference proteome</keyword>
<keyword id="KW-0677">Repeat</keyword>
<keyword id="KW-0964">Secreted</keyword>
<keyword id="KW-0732">Signal</keyword>
<reference key="1">
    <citation type="submission" date="2000-07" db="EMBL/GenBank/DDBJ databases">
        <title>Cloning of ASPIC, a novel protein secreted by human normal and osteoarthritic cartilage, identified by 2D electrophoresis and mass spectrometry.</title>
        <authorList>
            <person name="Bolton M.C."/>
            <person name="Wait R."/>
            <person name="Saklatvala J."/>
        </authorList>
    </citation>
    <scope>NUCLEOTIDE SEQUENCE [MRNA] (ISOFORM 1)</scope>
    <source>
        <tissue>Cartilage</tissue>
    </source>
</reference>
<reference key="2">
    <citation type="journal article" date="2004" name="Nat. Genet.">
        <title>Complete sequencing and characterization of 21,243 full-length human cDNAs.</title>
        <authorList>
            <person name="Ota T."/>
            <person name="Suzuki Y."/>
            <person name="Nishikawa T."/>
            <person name="Otsuki T."/>
            <person name="Sugiyama T."/>
            <person name="Irie R."/>
            <person name="Wakamatsu A."/>
            <person name="Hayashi K."/>
            <person name="Sato H."/>
            <person name="Nagai K."/>
            <person name="Kimura K."/>
            <person name="Makita H."/>
            <person name="Sekine M."/>
            <person name="Obayashi M."/>
            <person name="Nishi T."/>
            <person name="Shibahara T."/>
            <person name="Tanaka T."/>
            <person name="Ishii S."/>
            <person name="Yamamoto J."/>
            <person name="Saito K."/>
            <person name="Kawai Y."/>
            <person name="Isono Y."/>
            <person name="Nakamura Y."/>
            <person name="Nagahari K."/>
            <person name="Murakami K."/>
            <person name="Yasuda T."/>
            <person name="Iwayanagi T."/>
            <person name="Wagatsuma M."/>
            <person name="Shiratori A."/>
            <person name="Sudo H."/>
            <person name="Hosoiri T."/>
            <person name="Kaku Y."/>
            <person name="Kodaira H."/>
            <person name="Kondo H."/>
            <person name="Sugawara M."/>
            <person name="Takahashi M."/>
            <person name="Kanda K."/>
            <person name="Yokoi T."/>
            <person name="Furuya T."/>
            <person name="Kikkawa E."/>
            <person name="Omura Y."/>
            <person name="Abe K."/>
            <person name="Kamihara K."/>
            <person name="Katsuta N."/>
            <person name="Sato K."/>
            <person name="Tanikawa M."/>
            <person name="Yamazaki M."/>
            <person name="Ninomiya K."/>
            <person name="Ishibashi T."/>
            <person name="Yamashita H."/>
            <person name="Murakawa K."/>
            <person name="Fujimori K."/>
            <person name="Tanai H."/>
            <person name="Kimata M."/>
            <person name="Watanabe M."/>
            <person name="Hiraoka S."/>
            <person name="Chiba Y."/>
            <person name="Ishida S."/>
            <person name="Ono Y."/>
            <person name="Takiguchi S."/>
            <person name="Watanabe S."/>
            <person name="Yosida M."/>
            <person name="Hotuta T."/>
            <person name="Kusano J."/>
            <person name="Kanehori K."/>
            <person name="Takahashi-Fujii A."/>
            <person name="Hara H."/>
            <person name="Tanase T.-O."/>
            <person name="Nomura Y."/>
            <person name="Togiya S."/>
            <person name="Komai F."/>
            <person name="Hara R."/>
            <person name="Takeuchi K."/>
            <person name="Arita M."/>
            <person name="Imose N."/>
            <person name="Musashino K."/>
            <person name="Yuuki H."/>
            <person name="Oshima A."/>
            <person name="Sasaki N."/>
            <person name="Aotsuka S."/>
            <person name="Yoshikawa Y."/>
            <person name="Matsunawa H."/>
            <person name="Ichihara T."/>
            <person name="Shiohata N."/>
            <person name="Sano S."/>
            <person name="Moriya S."/>
            <person name="Momiyama H."/>
            <person name="Satoh N."/>
            <person name="Takami S."/>
            <person name="Terashima Y."/>
            <person name="Suzuki O."/>
            <person name="Nakagawa S."/>
            <person name="Senoh A."/>
            <person name="Mizoguchi H."/>
            <person name="Goto Y."/>
            <person name="Shimizu F."/>
            <person name="Wakebe H."/>
            <person name="Hishigaki H."/>
            <person name="Watanabe T."/>
            <person name="Sugiyama A."/>
            <person name="Takemoto M."/>
            <person name="Kawakami B."/>
            <person name="Yamazaki M."/>
            <person name="Watanabe K."/>
            <person name="Kumagai A."/>
            <person name="Itakura S."/>
            <person name="Fukuzumi Y."/>
            <person name="Fujimori Y."/>
            <person name="Komiyama M."/>
            <person name="Tashiro H."/>
            <person name="Tanigami A."/>
            <person name="Fujiwara T."/>
            <person name="Ono T."/>
            <person name="Yamada K."/>
            <person name="Fujii Y."/>
            <person name="Ozaki K."/>
            <person name="Hirao M."/>
            <person name="Ohmori Y."/>
            <person name="Kawabata A."/>
            <person name="Hikiji T."/>
            <person name="Kobatake N."/>
            <person name="Inagaki H."/>
            <person name="Ikema Y."/>
            <person name="Okamoto S."/>
            <person name="Okitani R."/>
            <person name="Kawakami T."/>
            <person name="Noguchi S."/>
            <person name="Itoh T."/>
            <person name="Shigeta K."/>
            <person name="Senba T."/>
            <person name="Matsumura K."/>
            <person name="Nakajima Y."/>
            <person name="Mizuno T."/>
            <person name="Morinaga M."/>
            <person name="Sasaki M."/>
            <person name="Togashi T."/>
            <person name="Oyama M."/>
            <person name="Hata H."/>
            <person name="Watanabe M."/>
            <person name="Komatsu T."/>
            <person name="Mizushima-Sugano J."/>
            <person name="Satoh T."/>
            <person name="Shirai Y."/>
            <person name="Takahashi Y."/>
            <person name="Nakagawa K."/>
            <person name="Okumura K."/>
            <person name="Nagase T."/>
            <person name="Nomura N."/>
            <person name="Kikuchi H."/>
            <person name="Masuho Y."/>
            <person name="Yamashita R."/>
            <person name="Nakai K."/>
            <person name="Yada T."/>
            <person name="Nakamura Y."/>
            <person name="Ohara O."/>
            <person name="Isogai T."/>
            <person name="Sugano S."/>
        </authorList>
    </citation>
    <scope>NUCLEOTIDE SEQUENCE [LARGE SCALE MRNA] (ISOFORM 1)</scope>
    <scope>NUCLEOTIDE SEQUENCE [LARGE SCALE MRNA] OF 105-661 (ISOFORM 3)</scope>
    <source>
        <tissue>Synovium</tissue>
    </source>
</reference>
<reference key="3">
    <citation type="journal article" date="2004" name="Nature">
        <title>The DNA sequence and comparative analysis of human chromosome 10.</title>
        <authorList>
            <person name="Deloukas P."/>
            <person name="Earthrowl M.E."/>
            <person name="Grafham D.V."/>
            <person name="Rubenfield M."/>
            <person name="French L."/>
            <person name="Steward C.A."/>
            <person name="Sims S.K."/>
            <person name="Jones M.C."/>
            <person name="Searle S."/>
            <person name="Scott C."/>
            <person name="Howe K."/>
            <person name="Hunt S.E."/>
            <person name="Andrews T.D."/>
            <person name="Gilbert J.G.R."/>
            <person name="Swarbreck D."/>
            <person name="Ashurst J.L."/>
            <person name="Taylor A."/>
            <person name="Battles J."/>
            <person name="Bird C.P."/>
            <person name="Ainscough R."/>
            <person name="Almeida J.P."/>
            <person name="Ashwell R.I.S."/>
            <person name="Ambrose K.D."/>
            <person name="Babbage A.K."/>
            <person name="Bagguley C.L."/>
            <person name="Bailey J."/>
            <person name="Banerjee R."/>
            <person name="Bates K."/>
            <person name="Beasley H."/>
            <person name="Bray-Allen S."/>
            <person name="Brown A.J."/>
            <person name="Brown J.Y."/>
            <person name="Burford D.C."/>
            <person name="Burrill W."/>
            <person name="Burton J."/>
            <person name="Cahill P."/>
            <person name="Camire D."/>
            <person name="Carter N.P."/>
            <person name="Chapman J.C."/>
            <person name="Clark S.Y."/>
            <person name="Clarke G."/>
            <person name="Clee C.M."/>
            <person name="Clegg S."/>
            <person name="Corby N."/>
            <person name="Coulson A."/>
            <person name="Dhami P."/>
            <person name="Dutta I."/>
            <person name="Dunn M."/>
            <person name="Faulkner L."/>
            <person name="Frankish A."/>
            <person name="Frankland J.A."/>
            <person name="Garner P."/>
            <person name="Garnett J."/>
            <person name="Gribble S."/>
            <person name="Griffiths C."/>
            <person name="Grocock R."/>
            <person name="Gustafson E."/>
            <person name="Hammond S."/>
            <person name="Harley J.L."/>
            <person name="Hart E."/>
            <person name="Heath P.D."/>
            <person name="Ho T.P."/>
            <person name="Hopkins B."/>
            <person name="Horne J."/>
            <person name="Howden P.J."/>
            <person name="Huckle E."/>
            <person name="Hynds C."/>
            <person name="Johnson C."/>
            <person name="Johnson D."/>
            <person name="Kana A."/>
            <person name="Kay M."/>
            <person name="Kimberley A.M."/>
            <person name="Kershaw J.K."/>
            <person name="Kokkinaki M."/>
            <person name="Laird G.K."/>
            <person name="Lawlor S."/>
            <person name="Lee H.M."/>
            <person name="Leongamornlert D.A."/>
            <person name="Laird G."/>
            <person name="Lloyd C."/>
            <person name="Lloyd D.M."/>
            <person name="Loveland J."/>
            <person name="Lovell J."/>
            <person name="McLaren S."/>
            <person name="McLay K.E."/>
            <person name="McMurray A."/>
            <person name="Mashreghi-Mohammadi M."/>
            <person name="Matthews L."/>
            <person name="Milne S."/>
            <person name="Nickerson T."/>
            <person name="Nguyen M."/>
            <person name="Overton-Larty E."/>
            <person name="Palmer S.A."/>
            <person name="Pearce A.V."/>
            <person name="Peck A.I."/>
            <person name="Pelan S."/>
            <person name="Phillimore B."/>
            <person name="Porter K."/>
            <person name="Rice C.M."/>
            <person name="Rogosin A."/>
            <person name="Ross M.T."/>
            <person name="Sarafidou T."/>
            <person name="Sehra H.K."/>
            <person name="Shownkeen R."/>
            <person name="Skuce C.D."/>
            <person name="Smith M."/>
            <person name="Standring L."/>
            <person name="Sycamore N."/>
            <person name="Tester J."/>
            <person name="Thorpe A."/>
            <person name="Torcasso W."/>
            <person name="Tracey A."/>
            <person name="Tromans A."/>
            <person name="Tsolas J."/>
            <person name="Wall M."/>
            <person name="Walsh J."/>
            <person name="Wang H."/>
            <person name="Weinstock K."/>
            <person name="West A.P."/>
            <person name="Willey D.L."/>
            <person name="Whitehead S.L."/>
            <person name="Wilming L."/>
            <person name="Wray P.W."/>
            <person name="Young L."/>
            <person name="Chen Y."/>
            <person name="Lovering R.C."/>
            <person name="Moschonas N.K."/>
            <person name="Siebert R."/>
            <person name="Fechtel K."/>
            <person name="Bentley D."/>
            <person name="Durbin R.M."/>
            <person name="Hubbard T."/>
            <person name="Doucette-Stamm L."/>
            <person name="Beck S."/>
            <person name="Smith D.R."/>
            <person name="Rogers J."/>
        </authorList>
    </citation>
    <scope>NUCLEOTIDE SEQUENCE [LARGE SCALE GENOMIC DNA]</scope>
</reference>
<reference key="4">
    <citation type="journal article" date="2001" name="Biochem. J.">
        <title>Chondrocyte expressed protein-68 (CEP-68), a novel human marker gene for cultured chondrocytes.</title>
        <authorList>
            <person name="Steck E."/>
            <person name="Benz K."/>
            <person name="Lorenz H."/>
            <person name="Loew M."/>
            <person name="Gress T."/>
            <person name="Richter W."/>
        </authorList>
    </citation>
    <scope>NUCLEOTIDE SEQUENCE [MRNA] OF 9-661 (ISOFORMS 1 AND 2)</scope>
    <scope>INDUCTION</scope>
    <scope>TISSUE SPECIFICITY</scope>
    <source>
        <tissue>Brain</tissue>
        <tissue>Cartilage</tissue>
    </source>
</reference>
<reference key="5">
    <citation type="journal article" date="2004" name="Genome Res.">
        <title>The status, quality, and expansion of the NIH full-length cDNA project: the Mammalian Gene Collection (MGC).</title>
        <authorList>
            <consortium name="The MGC Project Team"/>
        </authorList>
    </citation>
    <scope>NUCLEOTIDE SEQUENCE [LARGE SCALE MRNA] OF 129-661 (ISOFORM 1)</scope>
    <source>
        <tissue>Brain</tissue>
    </source>
</reference>
<reference key="6">
    <citation type="journal article" date="2007" name="Matrix Biol.">
        <title>Chondrocyte secreted CRTAC1: a glycosylated extracellular matrix molecule of human articular cartilage.</title>
        <authorList>
            <person name="Steck E."/>
            <person name="Braeun J."/>
            <person name="Pelttari K."/>
            <person name="Kadel S."/>
            <person name="Kalbacher H."/>
            <person name="Richter W."/>
        </authorList>
    </citation>
    <scope>NUCLEOTIDE SEQUENCE [MRNA] OF 608-661 (ISOFORM 1)</scope>
    <scope>PARTIAL NUCLEOTIDE SEQUENCE [MRNA] (ISOFORM 2)</scope>
    <scope>EXON SHARING WITH GOLGA7B (ISOFORM 1)</scope>
    <scope>GLYCOSYLATION</scope>
    <scope>SUBCELLULAR LOCATION</scope>
    <scope>TISSUE SPECIFICITY</scope>
</reference>
<organism>
    <name type="scientific">Homo sapiens</name>
    <name type="common">Human</name>
    <dbReference type="NCBI Taxonomy" id="9606"/>
    <lineage>
        <taxon>Eukaryota</taxon>
        <taxon>Metazoa</taxon>
        <taxon>Chordata</taxon>
        <taxon>Craniata</taxon>
        <taxon>Vertebrata</taxon>
        <taxon>Euteleostomi</taxon>
        <taxon>Mammalia</taxon>
        <taxon>Eutheria</taxon>
        <taxon>Euarchontoglires</taxon>
        <taxon>Primates</taxon>
        <taxon>Haplorrhini</taxon>
        <taxon>Catarrhini</taxon>
        <taxon>Hominidae</taxon>
        <taxon>Homo</taxon>
    </lineage>
</organism>
<accession>Q9NQ79</accession>
<accession>B1ALN4</accession>
<accession>Q5T4F8</accession>
<accession>Q8N4H6</accession>
<accession>Q8TE52</accession>
<accession>Q9NQ78</accession>
<accession>Q9NQ80</accession>
<accession>Q9NW46</accession>
<sequence length="661" mass="71421">MAPSADPGMSRMLPFLLLLWFLPITEGSQRAEPMFTAVTNSVLPPDYDSNPTQLNYGVAVTDVDHDGDFEIVVAGYNGPNLVLKYDRAQKRLVNIAVDERSSPYYALRDRQGNAIGVTACDIDGDGREEIYFLNTNNAFSGVATYTDKLFKFRNNRWEDILSDEVNVARGVASLFAGRSVACVDRKGSGRYSIYIANYAYGNVGPDALIEMDPEASDLSRGILALRDVAAEAGVSKYTGGRGVSVGPILSSSASDIFCDNENGPNFLFHNRGDGTFVDAAASAGVDDPHQHGRGVALADFNRDGKVDIVYGNWNGPHRLYLQMSTHGKVRFRDIASPKFSMPSPVRTVITADFDNDQELEIFFNNIAYRSSSANRLFRVIRREHGDPLIEELNPGDALEPEGRGTGGVVTDFDGDGMLDLILSHGESMAQPLSVFRGNQGFNNNWLRVVPRTRFGAFARGAKVVLYTKKSGAHLRIIDGGSGYLCEMEPVAHFGLGKDEASSVEVTWPDGKMVSRNVASGEMNSVLEILYPRDEDTLQDPAPLECGQGFSQQENGHCMDTNECIQFPFVCPRDKPVCVNTYGSYRCRTNKKCSRGYEPNEDGTACVGTLGQSPGPRPTTPTAAAATAAAAAAAGAATAAPVLVDGDLNLGSVVKESCEPSC</sequence>